<dbReference type="EC" id="2.7.7.8" evidence="1"/>
<dbReference type="EMBL" id="CP000360">
    <property type="protein sequence ID" value="ABF40996.1"/>
    <property type="molecule type" value="Genomic_DNA"/>
</dbReference>
<dbReference type="RefSeq" id="WP_011522797.1">
    <property type="nucleotide sequence ID" value="NC_008009.1"/>
</dbReference>
<dbReference type="SMR" id="Q1IQ54"/>
<dbReference type="STRING" id="204669.Acid345_1995"/>
<dbReference type="EnsemblBacteria" id="ABF40996">
    <property type="protein sequence ID" value="ABF40996"/>
    <property type="gene ID" value="Acid345_1995"/>
</dbReference>
<dbReference type="KEGG" id="aba:Acid345_1995"/>
<dbReference type="eggNOG" id="COG1185">
    <property type="taxonomic scope" value="Bacteria"/>
</dbReference>
<dbReference type="HOGENOM" id="CLU_004217_2_2_0"/>
<dbReference type="OrthoDB" id="9804305at2"/>
<dbReference type="Proteomes" id="UP000002432">
    <property type="component" value="Chromosome"/>
</dbReference>
<dbReference type="GO" id="GO:0005829">
    <property type="term" value="C:cytosol"/>
    <property type="evidence" value="ECO:0007669"/>
    <property type="project" value="TreeGrafter"/>
</dbReference>
<dbReference type="GO" id="GO:0000175">
    <property type="term" value="F:3'-5'-RNA exonuclease activity"/>
    <property type="evidence" value="ECO:0007669"/>
    <property type="project" value="TreeGrafter"/>
</dbReference>
<dbReference type="GO" id="GO:0000287">
    <property type="term" value="F:magnesium ion binding"/>
    <property type="evidence" value="ECO:0007669"/>
    <property type="project" value="UniProtKB-UniRule"/>
</dbReference>
<dbReference type="GO" id="GO:0004654">
    <property type="term" value="F:polyribonucleotide nucleotidyltransferase activity"/>
    <property type="evidence" value="ECO:0007669"/>
    <property type="project" value="UniProtKB-UniRule"/>
</dbReference>
<dbReference type="GO" id="GO:0003723">
    <property type="term" value="F:RNA binding"/>
    <property type="evidence" value="ECO:0007669"/>
    <property type="project" value="UniProtKB-UniRule"/>
</dbReference>
<dbReference type="GO" id="GO:0006402">
    <property type="term" value="P:mRNA catabolic process"/>
    <property type="evidence" value="ECO:0007669"/>
    <property type="project" value="UniProtKB-UniRule"/>
</dbReference>
<dbReference type="GO" id="GO:0006396">
    <property type="term" value="P:RNA processing"/>
    <property type="evidence" value="ECO:0007669"/>
    <property type="project" value="InterPro"/>
</dbReference>
<dbReference type="CDD" id="cd02393">
    <property type="entry name" value="KH-I_PNPase"/>
    <property type="match status" value="1"/>
</dbReference>
<dbReference type="CDD" id="cd11363">
    <property type="entry name" value="RNase_PH_PNPase_1"/>
    <property type="match status" value="1"/>
</dbReference>
<dbReference type="CDD" id="cd11364">
    <property type="entry name" value="RNase_PH_PNPase_2"/>
    <property type="match status" value="1"/>
</dbReference>
<dbReference type="CDD" id="cd04472">
    <property type="entry name" value="S1_PNPase"/>
    <property type="match status" value="1"/>
</dbReference>
<dbReference type="FunFam" id="3.30.1370.10:FF:000001">
    <property type="entry name" value="Polyribonucleotide nucleotidyltransferase"/>
    <property type="match status" value="1"/>
</dbReference>
<dbReference type="FunFam" id="3.30.230.70:FF:000001">
    <property type="entry name" value="Polyribonucleotide nucleotidyltransferase"/>
    <property type="match status" value="1"/>
</dbReference>
<dbReference type="FunFam" id="3.30.230.70:FF:000002">
    <property type="entry name" value="Polyribonucleotide nucleotidyltransferase"/>
    <property type="match status" value="1"/>
</dbReference>
<dbReference type="Gene3D" id="3.30.230.70">
    <property type="entry name" value="GHMP Kinase, N-terminal domain"/>
    <property type="match status" value="2"/>
</dbReference>
<dbReference type="Gene3D" id="3.30.1370.10">
    <property type="entry name" value="K Homology domain, type 1"/>
    <property type="match status" value="1"/>
</dbReference>
<dbReference type="Gene3D" id="2.40.50.140">
    <property type="entry name" value="Nucleic acid-binding proteins"/>
    <property type="match status" value="1"/>
</dbReference>
<dbReference type="HAMAP" id="MF_01595">
    <property type="entry name" value="PNPase"/>
    <property type="match status" value="1"/>
</dbReference>
<dbReference type="InterPro" id="IPR001247">
    <property type="entry name" value="ExoRNase_PH_dom1"/>
</dbReference>
<dbReference type="InterPro" id="IPR015847">
    <property type="entry name" value="ExoRNase_PH_dom2"/>
</dbReference>
<dbReference type="InterPro" id="IPR036345">
    <property type="entry name" value="ExoRNase_PH_dom2_sf"/>
</dbReference>
<dbReference type="InterPro" id="IPR004087">
    <property type="entry name" value="KH_dom"/>
</dbReference>
<dbReference type="InterPro" id="IPR004088">
    <property type="entry name" value="KH_dom_type_1"/>
</dbReference>
<dbReference type="InterPro" id="IPR036612">
    <property type="entry name" value="KH_dom_type_1_sf"/>
</dbReference>
<dbReference type="InterPro" id="IPR012340">
    <property type="entry name" value="NA-bd_OB-fold"/>
</dbReference>
<dbReference type="InterPro" id="IPR012162">
    <property type="entry name" value="PNPase"/>
</dbReference>
<dbReference type="InterPro" id="IPR027408">
    <property type="entry name" value="PNPase/RNase_PH_dom_sf"/>
</dbReference>
<dbReference type="InterPro" id="IPR015848">
    <property type="entry name" value="PNPase_PH_RNA-bd_bac/org-type"/>
</dbReference>
<dbReference type="InterPro" id="IPR036456">
    <property type="entry name" value="PNPase_PH_RNA-bd_sf"/>
</dbReference>
<dbReference type="InterPro" id="IPR020568">
    <property type="entry name" value="Ribosomal_Su5_D2-typ_SF"/>
</dbReference>
<dbReference type="InterPro" id="IPR003029">
    <property type="entry name" value="S1_domain"/>
</dbReference>
<dbReference type="NCBIfam" id="TIGR03591">
    <property type="entry name" value="polynuc_phos"/>
    <property type="match status" value="1"/>
</dbReference>
<dbReference type="NCBIfam" id="NF008805">
    <property type="entry name" value="PRK11824.1"/>
    <property type="match status" value="1"/>
</dbReference>
<dbReference type="PANTHER" id="PTHR11252">
    <property type="entry name" value="POLYRIBONUCLEOTIDE NUCLEOTIDYLTRANSFERASE"/>
    <property type="match status" value="1"/>
</dbReference>
<dbReference type="PANTHER" id="PTHR11252:SF0">
    <property type="entry name" value="POLYRIBONUCLEOTIDE NUCLEOTIDYLTRANSFERASE 1, MITOCHONDRIAL"/>
    <property type="match status" value="1"/>
</dbReference>
<dbReference type="Pfam" id="PF00013">
    <property type="entry name" value="KH_1"/>
    <property type="match status" value="1"/>
</dbReference>
<dbReference type="Pfam" id="PF03726">
    <property type="entry name" value="PNPase"/>
    <property type="match status" value="1"/>
</dbReference>
<dbReference type="Pfam" id="PF01138">
    <property type="entry name" value="RNase_PH"/>
    <property type="match status" value="2"/>
</dbReference>
<dbReference type="Pfam" id="PF03725">
    <property type="entry name" value="RNase_PH_C"/>
    <property type="match status" value="2"/>
</dbReference>
<dbReference type="Pfam" id="PF00575">
    <property type="entry name" value="S1"/>
    <property type="match status" value="1"/>
</dbReference>
<dbReference type="SMART" id="SM00322">
    <property type="entry name" value="KH"/>
    <property type="match status" value="1"/>
</dbReference>
<dbReference type="SMART" id="SM00316">
    <property type="entry name" value="S1"/>
    <property type="match status" value="1"/>
</dbReference>
<dbReference type="SUPFAM" id="SSF54791">
    <property type="entry name" value="Eukaryotic type KH-domain (KH-domain type I)"/>
    <property type="match status" value="1"/>
</dbReference>
<dbReference type="SUPFAM" id="SSF50249">
    <property type="entry name" value="Nucleic acid-binding proteins"/>
    <property type="match status" value="1"/>
</dbReference>
<dbReference type="SUPFAM" id="SSF46915">
    <property type="entry name" value="Polynucleotide phosphorylase/guanosine pentaphosphate synthase (PNPase/GPSI), domain 3"/>
    <property type="match status" value="1"/>
</dbReference>
<dbReference type="SUPFAM" id="SSF55666">
    <property type="entry name" value="Ribonuclease PH domain 2-like"/>
    <property type="match status" value="2"/>
</dbReference>
<dbReference type="SUPFAM" id="SSF54211">
    <property type="entry name" value="Ribosomal protein S5 domain 2-like"/>
    <property type="match status" value="2"/>
</dbReference>
<dbReference type="PROSITE" id="PS50084">
    <property type="entry name" value="KH_TYPE_1"/>
    <property type="match status" value="1"/>
</dbReference>
<dbReference type="PROSITE" id="PS50126">
    <property type="entry name" value="S1"/>
    <property type="match status" value="1"/>
</dbReference>
<sequence length="815" mass="86885">MKPEPKVATVEFTGGKSLSFETGKLAKQAHGSAIVRSGQSVVLATACANADPREGIDFFPLTVDYREYTYAGGRFPGGFIKREGRPSEKEILTSRQIDRPIRPLFPEGFRCETQVIAMVLSADSENDPDVCGINGASAALAVSDIPFNGPIGAVRVGLIEGQNIVNPTYDEMRASKLNIMVVGTAEGIVMIESGAHEATEEEVVSAIEFGHGEIKKICAVISKLAKEVGKTKRTVAPVELDQPYLDGLRKKIGADLADALNTEKYPKSESYAKVKEIKSKLKEEIPADDDAALKKLGKYYELLREDIFRQQVTKEKRRPDGRAFDQIRQIWIEVDVLPRTHGSAVFTRGETQALVTTTLGTGDDMQRMEGFEGEAKKRFMLHYNFPPFSVGEVAFLRGAGRREIGHGALAERALSAVLPSEDKWPYAMRVVSDILESNGSSSMASICGGSLSLMDAGVPLKAPVAGIAMGLVKEGDDYAILTDIAGAEDHYGDMDFKVAGTTQGITALQMDIKIGGITAQIMREALEQARRGRLFILDKMNEVIQSPRTELSEFAPRFYTLQIPTDKIRDLIGPGGKVIRGIVEATGVKIDVEDSGKVNVASSDQEAAKKALKMIGDITATAEVGKTYLGTVTRLADFGAFVEILPGTDGLLHISEVAEHRIKDVKDELHEGDQVLVKVLAVDGNRIKLSRKAVLKEQRAKMATEGGGDGGPAPEVEHSEHGAPGGVTFEGGYEGGDEPEVEEGEPNFNRDDAPGSHGATQPHSGGDRPDRGPRPHGGGGGAGRGGRGRRPGGGGGGGRGGHGGRGGGGGGRGRG</sequence>
<evidence type="ECO:0000255" key="1">
    <source>
        <dbReference type="HAMAP-Rule" id="MF_01595"/>
    </source>
</evidence>
<evidence type="ECO:0000256" key="2">
    <source>
        <dbReference type="SAM" id="MobiDB-lite"/>
    </source>
</evidence>
<reference key="1">
    <citation type="journal article" date="2009" name="Appl. Environ. Microbiol.">
        <title>Three genomes from the phylum Acidobacteria provide insight into the lifestyles of these microorganisms in soils.</title>
        <authorList>
            <person name="Ward N.L."/>
            <person name="Challacombe J.F."/>
            <person name="Janssen P.H."/>
            <person name="Henrissat B."/>
            <person name="Coutinho P.M."/>
            <person name="Wu M."/>
            <person name="Xie G."/>
            <person name="Haft D.H."/>
            <person name="Sait M."/>
            <person name="Badger J."/>
            <person name="Barabote R.D."/>
            <person name="Bradley B."/>
            <person name="Brettin T.S."/>
            <person name="Brinkac L.M."/>
            <person name="Bruce D."/>
            <person name="Creasy T."/>
            <person name="Daugherty S.C."/>
            <person name="Davidsen T.M."/>
            <person name="DeBoy R.T."/>
            <person name="Detter J.C."/>
            <person name="Dodson R.J."/>
            <person name="Durkin A.S."/>
            <person name="Ganapathy A."/>
            <person name="Gwinn-Giglio M."/>
            <person name="Han C.S."/>
            <person name="Khouri H."/>
            <person name="Kiss H."/>
            <person name="Kothari S.P."/>
            <person name="Madupu R."/>
            <person name="Nelson K.E."/>
            <person name="Nelson W.C."/>
            <person name="Paulsen I."/>
            <person name="Penn K."/>
            <person name="Ren Q."/>
            <person name="Rosovitz M.J."/>
            <person name="Selengut J.D."/>
            <person name="Shrivastava S."/>
            <person name="Sullivan S.A."/>
            <person name="Tapia R."/>
            <person name="Thompson L.S."/>
            <person name="Watkins K.L."/>
            <person name="Yang Q."/>
            <person name="Yu C."/>
            <person name="Zafar N."/>
            <person name="Zhou L."/>
            <person name="Kuske C.R."/>
        </authorList>
    </citation>
    <scope>NUCLEOTIDE SEQUENCE [LARGE SCALE GENOMIC DNA]</scope>
    <source>
        <strain>Ellin345</strain>
    </source>
</reference>
<proteinExistence type="inferred from homology"/>
<organism>
    <name type="scientific">Koribacter versatilis (strain Ellin345)</name>
    <dbReference type="NCBI Taxonomy" id="204669"/>
    <lineage>
        <taxon>Bacteria</taxon>
        <taxon>Pseudomonadati</taxon>
        <taxon>Acidobacteriota</taxon>
        <taxon>Terriglobia</taxon>
        <taxon>Terriglobales</taxon>
        <taxon>Candidatus Korobacteraceae</taxon>
        <taxon>Candidatus Korobacter</taxon>
    </lineage>
</organism>
<name>PNP_KORVE</name>
<protein>
    <recommendedName>
        <fullName evidence="1">Polyribonucleotide nucleotidyltransferase</fullName>
        <ecNumber evidence="1">2.7.7.8</ecNumber>
    </recommendedName>
    <alternativeName>
        <fullName evidence="1">Polynucleotide phosphorylase</fullName>
        <shortName evidence="1">PNPase</shortName>
    </alternativeName>
</protein>
<accession>Q1IQ54</accession>
<feature type="chain" id="PRO_0000329478" description="Polyribonucleotide nucleotidyltransferase">
    <location>
        <begin position="1"/>
        <end position="815"/>
    </location>
</feature>
<feature type="domain" description="KH" evidence="1">
    <location>
        <begin position="556"/>
        <end position="615"/>
    </location>
</feature>
<feature type="domain" description="S1 motif" evidence="1">
    <location>
        <begin position="625"/>
        <end position="692"/>
    </location>
</feature>
<feature type="region of interest" description="Disordered" evidence="2">
    <location>
        <begin position="700"/>
        <end position="815"/>
    </location>
</feature>
<feature type="compositionally biased region" description="Gly residues" evidence="2">
    <location>
        <begin position="723"/>
        <end position="734"/>
    </location>
</feature>
<feature type="compositionally biased region" description="Acidic residues" evidence="2">
    <location>
        <begin position="735"/>
        <end position="745"/>
    </location>
</feature>
<feature type="compositionally biased region" description="Gly residues" evidence="2">
    <location>
        <begin position="775"/>
        <end position="815"/>
    </location>
</feature>
<feature type="binding site" evidence="1">
    <location>
        <position position="489"/>
    </location>
    <ligand>
        <name>Mg(2+)</name>
        <dbReference type="ChEBI" id="CHEBI:18420"/>
    </ligand>
</feature>
<feature type="binding site" evidence="1">
    <location>
        <position position="495"/>
    </location>
    <ligand>
        <name>Mg(2+)</name>
        <dbReference type="ChEBI" id="CHEBI:18420"/>
    </ligand>
</feature>
<comment type="function">
    <text evidence="1">Involved in mRNA degradation. Catalyzes the phosphorolysis of single-stranded polyribonucleotides processively in the 3'- to 5'-direction.</text>
</comment>
<comment type="catalytic activity">
    <reaction evidence="1">
        <text>RNA(n+1) + phosphate = RNA(n) + a ribonucleoside 5'-diphosphate</text>
        <dbReference type="Rhea" id="RHEA:22096"/>
        <dbReference type="Rhea" id="RHEA-COMP:14527"/>
        <dbReference type="Rhea" id="RHEA-COMP:17342"/>
        <dbReference type="ChEBI" id="CHEBI:43474"/>
        <dbReference type="ChEBI" id="CHEBI:57930"/>
        <dbReference type="ChEBI" id="CHEBI:140395"/>
        <dbReference type="EC" id="2.7.7.8"/>
    </reaction>
</comment>
<comment type="cofactor">
    <cofactor evidence="1">
        <name>Mg(2+)</name>
        <dbReference type="ChEBI" id="CHEBI:18420"/>
    </cofactor>
</comment>
<comment type="subcellular location">
    <subcellularLocation>
        <location evidence="1">Cytoplasm</location>
    </subcellularLocation>
</comment>
<comment type="similarity">
    <text evidence="1">Belongs to the polyribonucleotide nucleotidyltransferase family.</text>
</comment>
<gene>
    <name evidence="1" type="primary">pnp</name>
    <name type="ordered locus">Acid345_1995</name>
</gene>
<keyword id="KW-0963">Cytoplasm</keyword>
<keyword id="KW-0460">Magnesium</keyword>
<keyword id="KW-0479">Metal-binding</keyword>
<keyword id="KW-0548">Nucleotidyltransferase</keyword>
<keyword id="KW-1185">Reference proteome</keyword>
<keyword id="KW-0694">RNA-binding</keyword>
<keyword id="KW-0808">Transferase</keyword>